<gene>
    <name evidence="5" type="primary">Pigm</name>
</gene>
<evidence type="ECO:0000250" key="1">
    <source>
        <dbReference type="UniProtKB" id="Q9H3S5"/>
    </source>
</evidence>
<evidence type="ECO:0000255" key="2"/>
<evidence type="ECO:0000269" key="3">
    <source>
    </source>
</evidence>
<evidence type="ECO:0000305" key="4"/>
<evidence type="ECO:0000312" key="5">
    <source>
        <dbReference type="RGD" id="71041"/>
    </source>
</evidence>
<accession>Q9EQY6</accession>
<proteinExistence type="evidence at protein level"/>
<reference key="1">
    <citation type="journal article" date="2001" name="EMBO J.">
        <title>PIG-M transfers the first mannose to glycosylphosphatidylinositol on the lumenal side of the ER.</title>
        <authorList>
            <person name="Maeda Y."/>
            <person name="Watanabe R."/>
            <person name="Harris C.L."/>
            <person name="Hong Y."/>
            <person name="Ohishi K."/>
            <person name="Kinoshita K."/>
            <person name="Kinoshita T."/>
        </authorList>
    </citation>
    <scope>NUCLEOTIDE SEQUENCE [MRNA]</scope>
</reference>
<reference key="2">
    <citation type="journal article" date="2005" name="Mol. Biol. Cell">
        <title>Mammalian PIG-X and yeast Pbn1p are the essential components of glycosylphosphatidylinositol-mannosyltransferase I.</title>
        <authorList>
            <person name="Ashida H."/>
            <person name="Hong Y."/>
            <person name="Murakami Y."/>
            <person name="Shishioh N."/>
            <person name="Sugimoto N."/>
            <person name="Kim Y.U."/>
            <person name="Maeda Y."/>
            <person name="Kinoshita T."/>
        </authorList>
    </citation>
    <scope>FUNCTION</scope>
    <scope>CATALYTIC ACTIVITY</scope>
    <scope>INTERACTION WITH PIGX</scope>
    <scope>PATHWAY</scope>
</reference>
<sequence length="423" mass="49594">MSYTKHWGEWFLNLRVPPAGVFGVAFLARVALVFYGVFQDRTLLVRYTDIDYHVFTDAARFVTEGRSPYLRATYRYTPLLSWLLTPNVYLSELFGKFLFISCDLLTAFLLYRLLLLKGLGRRQACGYCVFWLLNPLPMAVSSRGNADSIVASLVLTTLYLIEKRLIACAAVFYGFAVHMKMYPVTYILPIALHLRPERDSDEGLRLARYSFQARLYDFLKRLCSWAVLLFVAIAGLTFLALSFGFYYKYGWEFLEHTYLYHLTRRDIRHNFSPYFYMLYLTAESKWSFTLGIAAFLPQFILLSAASFAYYRDLVFCCFLHTSIFVTFNKVCTSQYFLWYLCLLPLVMPLVRMPWKRAVVLLMLWFIGQALWLAPAYVLEFQGKNTFLFIWLAGLFFLLINCSILIQIISHYKEDRLTERIKYD</sequence>
<organism>
    <name type="scientific">Rattus norvegicus</name>
    <name type="common">Rat</name>
    <dbReference type="NCBI Taxonomy" id="10116"/>
    <lineage>
        <taxon>Eukaryota</taxon>
        <taxon>Metazoa</taxon>
        <taxon>Chordata</taxon>
        <taxon>Craniata</taxon>
        <taxon>Vertebrata</taxon>
        <taxon>Euteleostomi</taxon>
        <taxon>Mammalia</taxon>
        <taxon>Eutheria</taxon>
        <taxon>Euarchontoglires</taxon>
        <taxon>Glires</taxon>
        <taxon>Rodentia</taxon>
        <taxon>Myomorpha</taxon>
        <taxon>Muroidea</taxon>
        <taxon>Muridae</taxon>
        <taxon>Murinae</taxon>
        <taxon>Rattus</taxon>
    </lineage>
</organism>
<dbReference type="EC" id="2.4.1.-" evidence="3"/>
<dbReference type="EMBL" id="AB028126">
    <property type="protein sequence ID" value="BAB18566.1"/>
    <property type="molecule type" value="mRNA"/>
</dbReference>
<dbReference type="RefSeq" id="NP_077058.1">
    <property type="nucleotide sequence ID" value="NM_024144.2"/>
</dbReference>
<dbReference type="RefSeq" id="XP_008772129.1">
    <property type="nucleotide sequence ID" value="XM_008773907.2"/>
</dbReference>
<dbReference type="SMR" id="Q9EQY6"/>
<dbReference type="FunCoup" id="Q9EQY6">
    <property type="interactions" value="2113"/>
</dbReference>
<dbReference type="STRING" id="10116.ENSRNOP00000010551"/>
<dbReference type="CAZy" id="GT50">
    <property type="family name" value="Glycosyltransferase Family 50"/>
</dbReference>
<dbReference type="PhosphoSitePlus" id="Q9EQY6"/>
<dbReference type="PaxDb" id="10116-ENSRNOP00000010551"/>
<dbReference type="Ensembl" id="ENSRNOT00000010551.4">
    <property type="protein sequence ID" value="ENSRNOP00000010551.3"/>
    <property type="gene ID" value="ENSRNOG00000007735.4"/>
</dbReference>
<dbReference type="GeneID" id="79112"/>
<dbReference type="KEGG" id="rno:79112"/>
<dbReference type="UCSC" id="RGD:71041">
    <property type="organism name" value="rat"/>
</dbReference>
<dbReference type="AGR" id="RGD:71041"/>
<dbReference type="CTD" id="93183"/>
<dbReference type="RGD" id="71041">
    <property type="gene designation" value="Pigm"/>
</dbReference>
<dbReference type="eggNOG" id="KOG3893">
    <property type="taxonomic scope" value="Eukaryota"/>
</dbReference>
<dbReference type="GeneTree" id="ENSGT00390000017728"/>
<dbReference type="HOGENOM" id="CLU_024220_3_1_1"/>
<dbReference type="InParanoid" id="Q9EQY6"/>
<dbReference type="OMA" id="MLWFIGQ"/>
<dbReference type="OrthoDB" id="1741594at2759"/>
<dbReference type="PhylomeDB" id="Q9EQY6"/>
<dbReference type="TreeFam" id="TF314752"/>
<dbReference type="Reactome" id="R-RNO-162710">
    <property type="pathway name" value="Synthesis of glycosylphosphatidylinositol (GPI)"/>
</dbReference>
<dbReference type="UniPathway" id="UPA00196"/>
<dbReference type="PRO" id="PR:Q9EQY6"/>
<dbReference type="Proteomes" id="UP000002494">
    <property type="component" value="Chromosome 13"/>
</dbReference>
<dbReference type="Bgee" id="ENSRNOG00000007735">
    <property type="expression patterns" value="Expressed in thymus and 18 other cell types or tissues"/>
</dbReference>
<dbReference type="GO" id="GO:0005789">
    <property type="term" value="C:endoplasmic reticulum membrane"/>
    <property type="evidence" value="ECO:0000250"/>
    <property type="project" value="UniProtKB"/>
</dbReference>
<dbReference type="GO" id="GO:1990529">
    <property type="term" value="C:glycosylphosphatidylinositol-mannosyltransferase I complex"/>
    <property type="evidence" value="ECO:0000314"/>
    <property type="project" value="UniProtKB"/>
</dbReference>
<dbReference type="GO" id="GO:0180041">
    <property type="term" value="F:glycolipid 1,4-alpha-mannosyltransferase activity"/>
    <property type="evidence" value="ECO:0000314"/>
    <property type="project" value="UniProtKB"/>
</dbReference>
<dbReference type="GO" id="GO:0000030">
    <property type="term" value="F:mannosyltransferase activity"/>
    <property type="evidence" value="ECO:0000314"/>
    <property type="project" value="RGD"/>
</dbReference>
<dbReference type="GO" id="GO:0006506">
    <property type="term" value="P:GPI anchor biosynthetic process"/>
    <property type="evidence" value="ECO:0000314"/>
    <property type="project" value="UniProtKB"/>
</dbReference>
<dbReference type="InterPro" id="IPR007704">
    <property type="entry name" value="PIG-M"/>
</dbReference>
<dbReference type="PANTHER" id="PTHR12886:SF0">
    <property type="entry name" value="GPI MANNOSYLTRANSFERASE 1"/>
    <property type="match status" value="1"/>
</dbReference>
<dbReference type="PANTHER" id="PTHR12886">
    <property type="entry name" value="PIG-M MANNOSYLTRANSFERASE"/>
    <property type="match status" value="1"/>
</dbReference>
<dbReference type="Pfam" id="PF05007">
    <property type="entry name" value="Mannosyl_trans"/>
    <property type="match status" value="1"/>
</dbReference>
<keyword id="KW-0256">Endoplasmic reticulum</keyword>
<keyword id="KW-0328">Glycosyltransferase</keyword>
<keyword id="KW-0337">GPI-anchor biosynthesis</keyword>
<keyword id="KW-0472">Membrane</keyword>
<keyword id="KW-1185">Reference proteome</keyword>
<keyword id="KW-0808">Transferase</keyword>
<keyword id="KW-0812">Transmembrane</keyword>
<keyword id="KW-1133">Transmembrane helix</keyword>
<name>PIGM_RAT</name>
<protein>
    <recommendedName>
        <fullName evidence="4">GPI alpha-1,4-mannosyltransferase I, catalytic subunit</fullName>
        <ecNumber evidence="3">2.4.1.-</ecNumber>
    </recommendedName>
    <alternativeName>
        <fullName>GPI mannosyltransferase I</fullName>
        <shortName>GPI-MT-I</shortName>
    </alternativeName>
    <alternativeName>
        <fullName>Phosphatidylinositol-glycan biosynthesis class M protein</fullName>
        <shortName>PIG-M</shortName>
    </alternativeName>
</protein>
<feature type="chain" id="PRO_0000246217" description="GPI alpha-1,4-mannosyltransferase I, catalytic subunit">
    <location>
        <begin position="1"/>
        <end position="423"/>
    </location>
</feature>
<feature type="topological domain" description="Cytoplasmic" evidence="1">
    <location>
        <begin position="1"/>
        <end position="17"/>
    </location>
</feature>
<feature type="transmembrane region" description="Helical" evidence="2">
    <location>
        <begin position="18"/>
        <end position="38"/>
    </location>
</feature>
<feature type="topological domain" description="Lumenal" evidence="1">
    <location>
        <begin position="39"/>
        <end position="89"/>
    </location>
</feature>
<feature type="transmembrane region" description="Helical" evidence="2">
    <location>
        <begin position="90"/>
        <end position="110"/>
    </location>
</feature>
<feature type="topological domain" description="Cytoplasmic" evidence="1">
    <location>
        <begin position="111"/>
        <end position="169"/>
    </location>
</feature>
<feature type="transmembrane region" description="Helical" evidence="2">
    <location>
        <begin position="170"/>
        <end position="190"/>
    </location>
</feature>
<feature type="topological domain" description="Lumenal" evidence="1">
    <location>
        <begin position="191"/>
        <end position="224"/>
    </location>
</feature>
<feature type="transmembrane region" description="Helical" evidence="2">
    <location>
        <begin position="225"/>
        <end position="245"/>
    </location>
</feature>
<feature type="topological domain" description="Cytoplasmic" evidence="1">
    <location>
        <begin position="246"/>
        <end position="287"/>
    </location>
</feature>
<feature type="transmembrane region" description="Helical" evidence="2">
    <location>
        <begin position="288"/>
        <end position="308"/>
    </location>
</feature>
<feature type="topological domain" description="Lumenal" evidence="1">
    <location>
        <begin position="309"/>
        <end position="329"/>
    </location>
</feature>
<feature type="transmembrane region" description="Helical" evidence="2">
    <location>
        <begin position="330"/>
        <end position="350"/>
    </location>
</feature>
<feature type="topological domain" description="Cytoplasmic" evidence="1">
    <location>
        <begin position="351"/>
        <end position="357"/>
    </location>
</feature>
<feature type="transmembrane region" description="Helical" evidence="2">
    <location>
        <begin position="358"/>
        <end position="378"/>
    </location>
</feature>
<feature type="topological domain" description="Lumenal" evidence="1">
    <location>
        <begin position="379"/>
        <end position="384"/>
    </location>
</feature>
<feature type="transmembrane region" description="Helical" evidence="2">
    <location>
        <begin position="385"/>
        <end position="405"/>
    </location>
</feature>
<feature type="topological domain" description="Cytoplasmic" evidence="1">
    <location>
        <begin position="406"/>
        <end position="423"/>
    </location>
</feature>
<comment type="function">
    <text evidence="3">Catalytic subunit of the glycosylphosphatidylinositol-mannosyltransferase I complex which catalyzes the transfer of the first mannose, via an alpha-1,4 bond from a dolichol-phosphate-mannose (Dol-P-Man) to the glucosaminyl acyl phosphatidylinositol (GlcN-(acyl)PI) intermediate to generate alpha-D-Man-(1-&gt;4)-alpha-D-GlcN-(1-&gt;6)-(1-radyl,2-acyl-sn-glycero-3-phospho)-2-acyl-inositol and participates in the sixth step of the glycosylphosphatidylinositol-anchor biosynthesis.</text>
</comment>
<comment type="pathway">
    <text evidence="3">Glycolipid biosynthesis; glycosylphosphatidylinositol-anchor biosynthesis.</text>
</comment>
<comment type="subunit">
    <text evidence="3">Part of the glycosylphosphatidylinositol-mannosyltransferase I complex that is composed of PIGM and PIGX (PubMed:15635094). Interacts with PIGX; PIGX stabilizes PIGM (PubMed:15635094).</text>
</comment>
<comment type="subcellular location">
    <subcellularLocation>
        <location evidence="1">Endoplasmic reticulum membrane</location>
        <topology evidence="1">Multi-pass membrane protein</topology>
    </subcellularLocation>
</comment>
<comment type="similarity">
    <text evidence="4">Belongs to the PIGM family.</text>
</comment>